<sequence length="337" mass="37188">MSVIETATVPLAQQQADALLNVKDLRVTFSTPDGDVTAVNDLNFSLRAGETLGIVGESGSGKSQTAFALMGLLAANGRIGGSATFNGREILNLPEHELNKLRAEQISMIFQDPMTSLNPYMRVGEQLMEVLMLHKNMSKAEAFEESVRMLDAVKMPEARKRMKMYPHEFSGGMRQRVMIAMALLCRPKLLIADEPTTALDVTVQAQIMTLLNELKREFNTAIIMITHDLVVVAGICDKVLVMYAGRTMEYGNARDVFYQPVHPYSIGLLNAVPRLDAEGETMLTIPGNPPNLLRLPKGCPFQPRCPHAMEICSSAPPLEEFTPGRLRACFKPVEELL</sequence>
<protein>
    <recommendedName>
        <fullName evidence="4">Oligopeptide transport ATP-binding protein OppD</fullName>
        <ecNumber evidence="5">7.4.2.6</ecNumber>
    </recommendedName>
</protein>
<proteinExistence type="evidence at protein level"/>
<comment type="function">
    <text evidence="3 4">Part of the ABC transporter complex OppABCDF involved in the uptake of oligopeptides and of the ABC transporter complex MppA-OppBCDF involved in the uptake of the cell wall murein tripeptide L-alanyl-gamma-D-glutamyl-meso-diaminopimelate (PubMed:9495761). Probably responsible for energy coupling to the transport system (Probable). Plays an important nutritional role and is involved in the recycling of cell wall peptides (PubMed:9495761).</text>
</comment>
<comment type="catalytic activity">
    <reaction evidence="5">
        <text>a [peptide](out) + ATP + H2O = a [peptide](in) + ADP + phosphate + H(+)</text>
        <dbReference type="Rhea" id="RHEA:78459"/>
        <dbReference type="Rhea" id="RHEA-COMP:19083"/>
        <dbReference type="ChEBI" id="CHEBI:15377"/>
        <dbReference type="ChEBI" id="CHEBI:15378"/>
        <dbReference type="ChEBI" id="CHEBI:30616"/>
        <dbReference type="ChEBI" id="CHEBI:33710"/>
        <dbReference type="ChEBI" id="CHEBI:43474"/>
        <dbReference type="ChEBI" id="CHEBI:456216"/>
        <dbReference type="EC" id="7.4.2.6"/>
    </reaction>
    <physiologicalReaction direction="left-to-right" evidence="5">
        <dbReference type="Rhea" id="RHEA:78460"/>
    </physiologicalReaction>
</comment>
<comment type="catalytic activity">
    <reaction evidence="5">
        <text>L-alanyl-gamma-D-glutamyl-meso-2,6-diaminopimelate(out) + ATP + H2O = L-alanyl-gamma-D-glutamyl-meso-2,6-diaminopimelate(in) + ADP + phosphate + H(+)</text>
        <dbReference type="Rhea" id="RHEA:29763"/>
        <dbReference type="ChEBI" id="CHEBI:15377"/>
        <dbReference type="ChEBI" id="CHEBI:15378"/>
        <dbReference type="ChEBI" id="CHEBI:30616"/>
        <dbReference type="ChEBI" id="CHEBI:43474"/>
        <dbReference type="ChEBI" id="CHEBI:61401"/>
        <dbReference type="ChEBI" id="CHEBI:456216"/>
    </reaction>
    <physiologicalReaction direction="left-to-right" evidence="5">
        <dbReference type="Rhea" id="RHEA:29764"/>
    </physiologicalReaction>
</comment>
<comment type="subunit">
    <text evidence="5">The complex is composed of two ATP-binding proteins (OppD and OppF), two transmembrane proteins (OppB and OppC) and a solute-binding protein (OppA or MppA).</text>
</comment>
<comment type="interaction">
    <interactant intactId="EBI-560815">
        <id>P76027</id>
    </interactant>
    <interactant intactId="EBI-560808">
        <id>P33916</id>
        <label>yejF</label>
    </interactant>
    <organismsDiffer>false</organismsDiffer>
    <experiments>3</experiments>
</comment>
<comment type="subcellular location">
    <subcellularLocation>
        <location evidence="1">Cell inner membrane</location>
        <topology evidence="1">Peripheral membrane protein</topology>
    </subcellularLocation>
</comment>
<comment type="similarity">
    <text evidence="4">Belongs to the ABC transporter superfamily.</text>
</comment>
<dbReference type="EC" id="7.4.2.6" evidence="5"/>
<dbReference type="EMBL" id="U00096">
    <property type="protein sequence ID" value="AAT48129.1"/>
    <property type="molecule type" value="Genomic_DNA"/>
</dbReference>
<dbReference type="EMBL" id="AP009048">
    <property type="protein sequence ID" value="BAA14778.1"/>
    <property type="molecule type" value="Genomic_DNA"/>
</dbReference>
<dbReference type="PIR" id="A64872">
    <property type="entry name" value="A64872"/>
</dbReference>
<dbReference type="RefSeq" id="WP_000110948.1">
    <property type="nucleotide sequence ID" value="NZ_LN832404.1"/>
</dbReference>
<dbReference type="RefSeq" id="YP_025300.1">
    <property type="nucleotide sequence ID" value="NC_000913.3"/>
</dbReference>
<dbReference type="SMR" id="P76027"/>
<dbReference type="BioGRID" id="4259494">
    <property type="interactions" value="329"/>
</dbReference>
<dbReference type="BioGRID" id="850169">
    <property type="interactions" value="1"/>
</dbReference>
<dbReference type="ComplexPortal" id="CPX-4343">
    <property type="entry name" value="Murein tripeptide ABC transporter complex"/>
</dbReference>
<dbReference type="ComplexPortal" id="CPX-4344">
    <property type="entry name" value="Oligopeptide ABC transporter complex"/>
</dbReference>
<dbReference type="DIP" id="DIP-10408N"/>
<dbReference type="FunCoup" id="P76027">
    <property type="interactions" value="411"/>
</dbReference>
<dbReference type="IntAct" id="P76027">
    <property type="interactions" value="3"/>
</dbReference>
<dbReference type="STRING" id="511145.b1246"/>
<dbReference type="TCDB" id="3.A.1.5.41">
    <property type="family name" value="the atp-binding cassette (abc) superfamily"/>
</dbReference>
<dbReference type="jPOST" id="P76027"/>
<dbReference type="PaxDb" id="511145-b1246"/>
<dbReference type="EnsemblBacteria" id="AAT48129">
    <property type="protein sequence ID" value="AAT48129"/>
    <property type="gene ID" value="b1246"/>
</dbReference>
<dbReference type="GeneID" id="945802"/>
<dbReference type="KEGG" id="ecj:JW1238"/>
<dbReference type="KEGG" id="eco:b1246"/>
<dbReference type="KEGG" id="ecoc:C3026_07320"/>
<dbReference type="PATRIC" id="fig|1411691.4.peg.1037"/>
<dbReference type="EchoBASE" id="EB0671"/>
<dbReference type="eggNOG" id="COG0444">
    <property type="taxonomic scope" value="Bacteria"/>
</dbReference>
<dbReference type="HOGENOM" id="CLU_000604_1_23_6"/>
<dbReference type="InParanoid" id="P76027"/>
<dbReference type="OMA" id="CPYADVP"/>
<dbReference type="OrthoDB" id="9784450at2"/>
<dbReference type="PhylomeDB" id="P76027"/>
<dbReference type="BioCyc" id="EcoCyc:OPPD-MONOMER"/>
<dbReference type="BioCyc" id="MetaCyc:OPPD-MONOMER"/>
<dbReference type="PRO" id="PR:P76027"/>
<dbReference type="Proteomes" id="UP000000625">
    <property type="component" value="Chromosome"/>
</dbReference>
<dbReference type="GO" id="GO:0055052">
    <property type="term" value="C:ATP-binding cassette (ABC) transporter complex, substrate-binding subunit-containing"/>
    <property type="evidence" value="ECO:0000303"/>
    <property type="project" value="ComplexPortal"/>
</dbReference>
<dbReference type="GO" id="GO:0016020">
    <property type="term" value="C:membrane"/>
    <property type="evidence" value="ECO:0000303"/>
    <property type="project" value="ComplexPortal"/>
</dbReference>
<dbReference type="GO" id="GO:0005524">
    <property type="term" value="F:ATP binding"/>
    <property type="evidence" value="ECO:0000255"/>
    <property type="project" value="EcoCyc"/>
</dbReference>
<dbReference type="GO" id="GO:0016887">
    <property type="term" value="F:ATP hydrolysis activity"/>
    <property type="evidence" value="ECO:0007669"/>
    <property type="project" value="InterPro"/>
</dbReference>
<dbReference type="GO" id="GO:0015640">
    <property type="term" value="F:peptidoglycan peptide transmembrane transporter activity"/>
    <property type="evidence" value="ECO:0000269"/>
    <property type="project" value="EcoCyc"/>
</dbReference>
<dbReference type="GO" id="GO:0140205">
    <property type="term" value="P:oligopeptide import across plasma membrane"/>
    <property type="evidence" value="ECO:0000303"/>
    <property type="project" value="ComplexPortal"/>
</dbReference>
<dbReference type="GO" id="GO:0015834">
    <property type="term" value="P:peptidoglycan-associated peptide transport"/>
    <property type="evidence" value="ECO:0000269"/>
    <property type="project" value="EcoCyc"/>
</dbReference>
<dbReference type="GO" id="GO:0015031">
    <property type="term" value="P:protein transport"/>
    <property type="evidence" value="ECO:0007669"/>
    <property type="project" value="UniProtKB-KW"/>
</dbReference>
<dbReference type="GO" id="GO:0140207">
    <property type="term" value="P:tripeptide import across plasma membrane"/>
    <property type="evidence" value="ECO:0000303"/>
    <property type="project" value="ComplexPortal"/>
</dbReference>
<dbReference type="CDD" id="cd03257">
    <property type="entry name" value="ABC_NikE_OppD_transporters"/>
    <property type="match status" value="1"/>
</dbReference>
<dbReference type="FunFam" id="3.40.50.300:FF:000016">
    <property type="entry name" value="Oligopeptide ABC transporter ATP-binding component"/>
    <property type="match status" value="1"/>
</dbReference>
<dbReference type="Gene3D" id="3.40.50.300">
    <property type="entry name" value="P-loop containing nucleotide triphosphate hydrolases"/>
    <property type="match status" value="1"/>
</dbReference>
<dbReference type="InterPro" id="IPR003593">
    <property type="entry name" value="AAA+_ATPase"/>
</dbReference>
<dbReference type="InterPro" id="IPR050388">
    <property type="entry name" value="ABC_Ni/Peptide_Import"/>
</dbReference>
<dbReference type="InterPro" id="IPR003439">
    <property type="entry name" value="ABC_transporter-like_ATP-bd"/>
</dbReference>
<dbReference type="InterPro" id="IPR017871">
    <property type="entry name" value="ABC_transporter-like_CS"/>
</dbReference>
<dbReference type="InterPro" id="IPR013563">
    <property type="entry name" value="Oligopep_ABC_C"/>
</dbReference>
<dbReference type="InterPro" id="IPR027417">
    <property type="entry name" value="P-loop_NTPase"/>
</dbReference>
<dbReference type="NCBIfam" id="TIGR01727">
    <property type="entry name" value="oligo_HPY"/>
    <property type="match status" value="1"/>
</dbReference>
<dbReference type="NCBIfam" id="NF007010">
    <property type="entry name" value="PRK09473.1"/>
    <property type="match status" value="1"/>
</dbReference>
<dbReference type="PANTHER" id="PTHR43297:SF7">
    <property type="entry name" value="D,D-DIPEPTIDE TRANSPORT ATP-BINDING PROTEIN DDPD-RELATED"/>
    <property type="match status" value="1"/>
</dbReference>
<dbReference type="PANTHER" id="PTHR43297">
    <property type="entry name" value="OLIGOPEPTIDE TRANSPORT ATP-BINDING PROTEIN APPD"/>
    <property type="match status" value="1"/>
</dbReference>
<dbReference type="Pfam" id="PF00005">
    <property type="entry name" value="ABC_tran"/>
    <property type="match status" value="1"/>
</dbReference>
<dbReference type="Pfam" id="PF08352">
    <property type="entry name" value="oligo_HPY"/>
    <property type="match status" value="1"/>
</dbReference>
<dbReference type="SMART" id="SM00382">
    <property type="entry name" value="AAA"/>
    <property type="match status" value="1"/>
</dbReference>
<dbReference type="SUPFAM" id="SSF52540">
    <property type="entry name" value="P-loop containing nucleoside triphosphate hydrolases"/>
    <property type="match status" value="1"/>
</dbReference>
<dbReference type="PROSITE" id="PS00211">
    <property type="entry name" value="ABC_TRANSPORTER_1"/>
    <property type="match status" value="1"/>
</dbReference>
<dbReference type="PROSITE" id="PS50893">
    <property type="entry name" value="ABC_TRANSPORTER_2"/>
    <property type="match status" value="1"/>
</dbReference>
<feature type="chain" id="PRO_0000092658" description="Oligopeptide transport ATP-binding protein OppD">
    <location>
        <begin position="1"/>
        <end position="337"/>
    </location>
</feature>
<feature type="domain" description="ABC transporter" evidence="2">
    <location>
        <begin position="20"/>
        <end position="269"/>
    </location>
</feature>
<feature type="binding site" evidence="2">
    <location>
        <begin position="56"/>
        <end position="63"/>
    </location>
    <ligand>
        <name>ATP</name>
        <dbReference type="ChEBI" id="CHEBI:30616"/>
    </ligand>
</feature>
<reference key="1">
    <citation type="journal article" date="1996" name="DNA Res.">
        <title>A 570-kb DNA sequence of the Escherichia coli K-12 genome corresponding to the 28.0-40.1 min region on the linkage map.</title>
        <authorList>
            <person name="Aiba H."/>
            <person name="Baba T."/>
            <person name="Fujita K."/>
            <person name="Hayashi K."/>
            <person name="Inada T."/>
            <person name="Isono K."/>
            <person name="Itoh T."/>
            <person name="Kasai H."/>
            <person name="Kashimoto K."/>
            <person name="Kimura S."/>
            <person name="Kitakawa M."/>
            <person name="Kitagawa M."/>
            <person name="Makino K."/>
            <person name="Miki T."/>
            <person name="Mizobuchi K."/>
            <person name="Mori H."/>
            <person name="Mori T."/>
            <person name="Motomura K."/>
            <person name="Nakade S."/>
            <person name="Nakamura Y."/>
            <person name="Nashimoto H."/>
            <person name="Nishio Y."/>
            <person name="Oshima T."/>
            <person name="Saito N."/>
            <person name="Sampei G."/>
            <person name="Seki Y."/>
            <person name="Sivasundaram S."/>
            <person name="Tagami H."/>
            <person name="Takeda J."/>
            <person name="Takemoto K."/>
            <person name="Takeuchi Y."/>
            <person name="Wada C."/>
            <person name="Yamamoto Y."/>
            <person name="Horiuchi T."/>
        </authorList>
    </citation>
    <scope>NUCLEOTIDE SEQUENCE [LARGE SCALE GENOMIC DNA]</scope>
    <source>
        <strain>K12 / W3110 / ATCC 27325 / DSM 5911</strain>
    </source>
</reference>
<reference key="2">
    <citation type="journal article" date="1997" name="Science">
        <title>The complete genome sequence of Escherichia coli K-12.</title>
        <authorList>
            <person name="Blattner F.R."/>
            <person name="Plunkett G. III"/>
            <person name="Bloch C.A."/>
            <person name="Perna N.T."/>
            <person name="Burland V."/>
            <person name="Riley M."/>
            <person name="Collado-Vides J."/>
            <person name="Glasner J.D."/>
            <person name="Rode C.K."/>
            <person name="Mayhew G.F."/>
            <person name="Gregor J."/>
            <person name="Davis N.W."/>
            <person name="Kirkpatrick H.A."/>
            <person name="Goeden M.A."/>
            <person name="Rose D.J."/>
            <person name="Mau B."/>
            <person name="Shao Y."/>
        </authorList>
    </citation>
    <scope>NUCLEOTIDE SEQUENCE [LARGE SCALE GENOMIC DNA]</scope>
    <source>
        <strain>K12 / MG1655 / ATCC 47076</strain>
    </source>
</reference>
<reference key="3">
    <citation type="journal article" date="2006" name="Nucleic Acids Res.">
        <title>Escherichia coli K-12: a cooperatively developed annotation snapshot -- 2005.</title>
        <authorList>
            <person name="Riley M."/>
            <person name="Abe T."/>
            <person name="Arnaud M.B."/>
            <person name="Berlyn M.K.B."/>
            <person name="Blattner F.R."/>
            <person name="Chaudhuri R.R."/>
            <person name="Glasner J.D."/>
            <person name="Horiuchi T."/>
            <person name="Keseler I.M."/>
            <person name="Kosuge T."/>
            <person name="Mori H."/>
            <person name="Perna N.T."/>
            <person name="Plunkett G. III"/>
            <person name="Rudd K.E."/>
            <person name="Serres M.H."/>
            <person name="Thomas G.H."/>
            <person name="Thomson N.R."/>
            <person name="Wishart D."/>
            <person name="Wanner B.L."/>
        </authorList>
    </citation>
    <scope>SEQUENCE REVISION TO 2</scope>
</reference>
<reference key="4">
    <citation type="journal article" date="2006" name="Mol. Syst. Biol.">
        <title>Highly accurate genome sequences of Escherichia coli K-12 strains MG1655 and W3110.</title>
        <authorList>
            <person name="Hayashi K."/>
            <person name="Morooka N."/>
            <person name="Yamamoto Y."/>
            <person name="Fujita K."/>
            <person name="Isono K."/>
            <person name="Choi S."/>
            <person name="Ohtsubo E."/>
            <person name="Baba T."/>
            <person name="Wanner B.L."/>
            <person name="Mori H."/>
            <person name="Horiuchi T."/>
        </authorList>
    </citation>
    <scope>NUCLEOTIDE SEQUENCE [LARGE SCALE GENOMIC DNA]</scope>
    <source>
        <strain>K12 / W3110 / ATCC 27325 / DSM 5911</strain>
    </source>
</reference>
<reference key="5">
    <citation type="journal article" date="1998" name="J. Bacteriol.">
        <title>MppA, a periplasmic binding protein essential for import of the bacterial cell wall peptide L-alanyl-gamma-D-glutamyl-meso-diaminopimelate.</title>
        <authorList>
            <person name="Park J.T."/>
            <person name="Raychaudhuri D."/>
            <person name="Li H."/>
            <person name="Normark S."/>
            <person name="Mengin-Lecreulx D."/>
        </authorList>
    </citation>
    <scope>FUNCTION</scope>
    <scope>SUBUNIT</scope>
    <source>
        <strain>K12 / AT980</strain>
    </source>
</reference>
<gene>
    <name type="primary">oppD</name>
    <name type="ordered locus">b1246</name>
    <name type="ordered locus">JW1238</name>
</gene>
<keyword id="KW-0067">ATP-binding</keyword>
<keyword id="KW-0997">Cell inner membrane</keyword>
<keyword id="KW-1003">Cell membrane</keyword>
<keyword id="KW-0472">Membrane</keyword>
<keyword id="KW-0547">Nucleotide-binding</keyword>
<keyword id="KW-0571">Peptide transport</keyword>
<keyword id="KW-0653">Protein transport</keyword>
<keyword id="KW-1185">Reference proteome</keyword>
<keyword id="KW-1278">Translocase</keyword>
<keyword id="KW-0813">Transport</keyword>
<accession>P76027</accession>
<accession>P77382</accession>
<evidence type="ECO:0000250" key="1">
    <source>
        <dbReference type="UniProtKB" id="P04285"/>
    </source>
</evidence>
<evidence type="ECO:0000255" key="2">
    <source>
        <dbReference type="PROSITE-ProRule" id="PRU00434"/>
    </source>
</evidence>
<evidence type="ECO:0000269" key="3">
    <source>
    </source>
</evidence>
<evidence type="ECO:0000305" key="4"/>
<evidence type="ECO:0000305" key="5">
    <source>
    </source>
</evidence>
<organism>
    <name type="scientific">Escherichia coli (strain K12)</name>
    <dbReference type="NCBI Taxonomy" id="83333"/>
    <lineage>
        <taxon>Bacteria</taxon>
        <taxon>Pseudomonadati</taxon>
        <taxon>Pseudomonadota</taxon>
        <taxon>Gammaproteobacteria</taxon>
        <taxon>Enterobacterales</taxon>
        <taxon>Enterobacteriaceae</taxon>
        <taxon>Escherichia</taxon>
    </lineage>
</organism>
<name>OPPD_ECOLI</name>